<sequence length="321" mass="36290">MKIILAIASLLVLSAVYARPASIKTFEEFKKAFNKTYATPEKEEVARKNFLESLKYVESNKGAINHLSDLSLDEFKNQFLMNANAFEQLKTQFDLNAETYACSINSVSLPSELDLRSLRTVTPIRMQGGCGSCWAFSGVASTESAYLAYRNMSLDLAEQELVDCASQNGCHGDTIPRGIEYIQQNGVVQEHYYPYVAREQSCHRPNAQRYGLKNYCQISPPDSNKIRQALTQTHTAVAVIIGIKDLNAFRHYDGRTIMQHDNGYQPNYHAVNIVGYGNTQGVDYWIVRNSWDTTWGDNGYGYFAANINLMMIEQYPYVVML</sequence>
<name>PEPT1_EURMA</name>
<accession>P25780</accession>
<accession>Q9TZZ3</accession>
<accession>Q9TZZ4</accession>
<accession>Q9UBA0</accession>
<dbReference type="EC" id="3.4.22.65"/>
<dbReference type="EMBL" id="AF047610">
    <property type="protein sequence ID" value="AAC82351.1"/>
    <property type="molecule type" value="mRNA"/>
</dbReference>
<dbReference type="EMBL" id="AF047611">
    <property type="protein sequence ID" value="AAC82352.1"/>
    <property type="status" value="ALT_INIT"/>
    <property type="molecule type" value="mRNA"/>
</dbReference>
<dbReference type="EMBL" id="AF047612">
    <property type="protein sequence ID" value="AAC82353.1"/>
    <property type="molecule type" value="mRNA"/>
</dbReference>
<dbReference type="EMBL" id="X60073">
    <property type="protein sequence ID" value="CAA42677.1"/>
    <property type="molecule type" value="Genomic_DNA"/>
</dbReference>
<dbReference type="PIR" id="S21864">
    <property type="entry name" value="S21864"/>
</dbReference>
<dbReference type="SMR" id="P25780"/>
<dbReference type="Allergome" id="1359">
    <property type="allergen name" value="Eur m 1.0101"/>
</dbReference>
<dbReference type="Allergome" id="1360">
    <property type="allergen name" value="Eur m 1.0102"/>
</dbReference>
<dbReference type="Allergome" id="338">
    <property type="allergen name" value="Eur m 1"/>
</dbReference>
<dbReference type="MEROPS" id="C01.073"/>
<dbReference type="GlyCosmos" id="P25780">
    <property type="glycosylation" value="2 sites, No reported glycans"/>
</dbReference>
<dbReference type="OrthoDB" id="10253408at2759"/>
<dbReference type="GO" id="GO:0005576">
    <property type="term" value="C:extracellular region"/>
    <property type="evidence" value="ECO:0007669"/>
    <property type="project" value="UniProtKB-SubCell"/>
</dbReference>
<dbReference type="GO" id="GO:0008234">
    <property type="term" value="F:cysteine-type peptidase activity"/>
    <property type="evidence" value="ECO:0007669"/>
    <property type="project" value="UniProtKB-KW"/>
</dbReference>
<dbReference type="GO" id="GO:0006508">
    <property type="term" value="P:proteolysis"/>
    <property type="evidence" value="ECO:0007669"/>
    <property type="project" value="UniProtKB-KW"/>
</dbReference>
<dbReference type="CDD" id="cd02248">
    <property type="entry name" value="Peptidase_C1A"/>
    <property type="match status" value="1"/>
</dbReference>
<dbReference type="Gene3D" id="3.90.70.10">
    <property type="entry name" value="Cysteine proteinases"/>
    <property type="match status" value="1"/>
</dbReference>
<dbReference type="InterPro" id="IPR038765">
    <property type="entry name" value="Papain-like_cys_pep_sf"/>
</dbReference>
<dbReference type="InterPro" id="IPR025661">
    <property type="entry name" value="Pept_asp_AS"/>
</dbReference>
<dbReference type="InterPro" id="IPR000169">
    <property type="entry name" value="Pept_cys_AS"/>
</dbReference>
<dbReference type="InterPro" id="IPR025660">
    <property type="entry name" value="Pept_his_AS"/>
</dbReference>
<dbReference type="InterPro" id="IPR013128">
    <property type="entry name" value="Peptidase_C1A"/>
</dbReference>
<dbReference type="InterPro" id="IPR000668">
    <property type="entry name" value="Peptidase_C1A_C"/>
</dbReference>
<dbReference type="InterPro" id="IPR039417">
    <property type="entry name" value="Peptidase_C1A_papain-like"/>
</dbReference>
<dbReference type="InterPro" id="IPR013201">
    <property type="entry name" value="Prot_inhib_I29"/>
</dbReference>
<dbReference type="PANTHER" id="PTHR12411">
    <property type="entry name" value="CYSTEINE PROTEASE FAMILY C1-RELATED"/>
    <property type="match status" value="1"/>
</dbReference>
<dbReference type="Pfam" id="PF08246">
    <property type="entry name" value="Inhibitor_I29"/>
    <property type="match status" value="1"/>
</dbReference>
<dbReference type="Pfam" id="PF00112">
    <property type="entry name" value="Peptidase_C1"/>
    <property type="match status" value="1"/>
</dbReference>
<dbReference type="PRINTS" id="PR00705">
    <property type="entry name" value="PAPAIN"/>
</dbReference>
<dbReference type="SMART" id="SM00848">
    <property type="entry name" value="Inhibitor_I29"/>
    <property type="match status" value="1"/>
</dbReference>
<dbReference type="SMART" id="SM00645">
    <property type="entry name" value="Pept_C1"/>
    <property type="match status" value="1"/>
</dbReference>
<dbReference type="SUPFAM" id="SSF54001">
    <property type="entry name" value="Cysteine proteinases"/>
    <property type="match status" value="1"/>
</dbReference>
<dbReference type="PROSITE" id="PS00640">
    <property type="entry name" value="THIOL_PROTEASE_ASN"/>
    <property type="match status" value="1"/>
</dbReference>
<dbReference type="PROSITE" id="PS00139">
    <property type="entry name" value="THIOL_PROTEASE_CYS"/>
    <property type="match status" value="1"/>
</dbReference>
<dbReference type="PROSITE" id="PS00639">
    <property type="entry name" value="THIOL_PROTEASE_HIS"/>
    <property type="match status" value="1"/>
</dbReference>
<protein>
    <recommendedName>
        <fullName>Peptidase 1</fullName>
        <ecNumber>3.4.22.65</ecNumber>
    </recommendedName>
    <alternativeName>
        <fullName>Allergen Eur m I</fullName>
    </alternativeName>
    <alternativeName>
        <fullName>Mite group 1 allergen Eur m 1</fullName>
    </alternativeName>
    <allergenName>Eur m 1</allergenName>
</protein>
<proteinExistence type="evidence at protein level"/>
<gene>
    <name type="primary">EURM1</name>
</gene>
<evidence type="ECO:0000250" key="1"/>
<evidence type="ECO:0000255" key="2"/>
<evidence type="ECO:0000255" key="3">
    <source>
        <dbReference type="PROSITE-ProRule" id="PRU10088"/>
    </source>
</evidence>
<evidence type="ECO:0000255" key="4">
    <source>
        <dbReference type="PROSITE-ProRule" id="PRU10089"/>
    </source>
</evidence>
<evidence type="ECO:0000255" key="5">
    <source>
        <dbReference type="PROSITE-ProRule" id="PRU10090"/>
    </source>
</evidence>
<evidence type="ECO:0000305" key="6"/>
<comment type="function">
    <text>Probable thiol protease.</text>
</comment>
<comment type="catalytic activity">
    <reaction>
        <text>Broad endopeptidase specificity.</text>
        <dbReference type="EC" id="3.4.22.65"/>
    </reaction>
</comment>
<comment type="subcellular location">
    <subcellularLocation>
        <location>Secreted</location>
    </subcellularLocation>
</comment>
<comment type="allergen">
    <text>Causes an allergic reaction in human. Common symptoms of mite allergy are bronchial asthma, allergic rhinitis and conjunctivitis.</text>
</comment>
<comment type="similarity">
    <text evidence="3 4 5">Belongs to the peptidase C1 family.</text>
</comment>
<comment type="sequence caution" evidence="6">
    <conflict type="erroneous initiation">
        <sequence resource="EMBL-CDS" id="AAC82352"/>
    </conflict>
</comment>
<organism>
    <name type="scientific">Euroglyphus maynei</name>
    <name type="common">Mayne's house dust mite</name>
    <dbReference type="NCBI Taxonomy" id="6958"/>
    <lineage>
        <taxon>Eukaryota</taxon>
        <taxon>Metazoa</taxon>
        <taxon>Ecdysozoa</taxon>
        <taxon>Arthropoda</taxon>
        <taxon>Chelicerata</taxon>
        <taxon>Arachnida</taxon>
        <taxon>Acari</taxon>
        <taxon>Acariformes</taxon>
        <taxon>Sarcoptiformes</taxon>
        <taxon>Astigmata</taxon>
        <taxon>Psoroptidia</taxon>
        <taxon>Analgoidea</taxon>
        <taxon>Pyroglyphidae</taxon>
        <taxon>Pyroglyphinae</taxon>
        <taxon>Euroglyphus</taxon>
    </lineage>
</organism>
<reference key="1">
    <citation type="journal article" date="1999" name="Int. Arch. Allergy Immunol.">
        <title>Molecular analysis of the group 1 and 2 allergens from the house dust mite, Euroglyphus maynei.</title>
        <authorList>
            <person name="Smith W."/>
            <person name="Mills K."/>
            <person name="Hazell L."/>
            <person name="Hart B.J."/>
            <person name="Thomas W."/>
        </authorList>
    </citation>
    <scope>NUCLEOTIDE SEQUENCE [MRNA] (EUR M 1.0101 AND EUR M 1.0102)</scope>
</reference>
<reference key="2">
    <citation type="journal article" date="1992" name="Int. Arch. Allergy Immunol.">
        <title>Molecular characterisation of group I allergen Eur m I from house dust mite Euroglyphus maynei.</title>
        <authorList>
            <person name="Kent N.A."/>
            <person name="Hill M.R."/>
            <person name="Keen J.N."/>
            <person name="Holland P.W."/>
            <person name="Hart B.J."/>
        </authorList>
    </citation>
    <scope>NUCLEOTIDE SEQUENCE [GENOMIC DNA] OF 99-309</scope>
</reference>
<keyword id="KW-0020">Allergen</keyword>
<keyword id="KW-1015">Disulfide bond</keyword>
<keyword id="KW-0325">Glycoprotein</keyword>
<keyword id="KW-0378">Hydrolase</keyword>
<keyword id="KW-0645">Protease</keyword>
<keyword id="KW-0964">Secreted</keyword>
<keyword id="KW-0732">Signal</keyword>
<keyword id="KW-0788">Thiol protease</keyword>
<keyword id="KW-0865">Zymogen</keyword>
<feature type="signal peptide" evidence="2">
    <location>
        <begin position="1"/>
        <end position="18"/>
    </location>
</feature>
<feature type="propeptide" id="PRO_0000026378">
    <location>
        <begin position="19"/>
        <end position="98"/>
    </location>
</feature>
<feature type="chain" id="PRO_0000026379" description="Peptidase 1">
    <location>
        <begin position="99"/>
        <end position="321"/>
    </location>
</feature>
<feature type="active site" evidence="1">
    <location>
        <position position="133"/>
    </location>
</feature>
<feature type="active site" evidence="1">
    <location>
        <position position="269"/>
    </location>
</feature>
<feature type="active site" evidence="1">
    <location>
        <position position="289"/>
    </location>
</feature>
<feature type="glycosylation site" description="N-linked (GlcNAc...) asparagine" evidence="2">
    <location>
        <position position="34"/>
    </location>
</feature>
<feature type="glycosylation site" description="N-linked (GlcNAc...) asparagine" evidence="2">
    <location>
        <position position="151"/>
    </location>
</feature>
<feature type="disulfide bond" evidence="1">
    <location>
        <begin position="130"/>
        <end position="170"/>
    </location>
</feature>
<feature type="sequence variant" description="In Eur m 1.0102.">
    <original>T</original>
    <variation>S</variation>
    <location>
        <position position="36"/>
    </location>
</feature>
<feature type="sequence variant" description="In Eur m 1.0102.">
    <original>M</original>
    <variation>N</variation>
    <location>
        <position position="126"/>
    </location>
</feature>
<feature type="sequence variant" description="In Eur m 1.0102.">
    <original>M</original>
    <variation>I</variation>
    <location>
        <position position="320"/>
    </location>
</feature>